<reference key="1">
    <citation type="journal article" date="1998" name="Nature">
        <title>Deciphering the biology of Mycobacterium tuberculosis from the complete genome sequence.</title>
        <authorList>
            <person name="Cole S.T."/>
            <person name="Brosch R."/>
            <person name="Parkhill J."/>
            <person name="Garnier T."/>
            <person name="Churcher C.M."/>
            <person name="Harris D.E."/>
            <person name="Gordon S.V."/>
            <person name="Eiglmeier K."/>
            <person name="Gas S."/>
            <person name="Barry C.E. III"/>
            <person name="Tekaia F."/>
            <person name="Badcock K."/>
            <person name="Basham D."/>
            <person name="Brown D."/>
            <person name="Chillingworth T."/>
            <person name="Connor R."/>
            <person name="Davies R.M."/>
            <person name="Devlin K."/>
            <person name="Feltwell T."/>
            <person name="Gentles S."/>
            <person name="Hamlin N."/>
            <person name="Holroyd S."/>
            <person name="Hornsby T."/>
            <person name="Jagels K."/>
            <person name="Krogh A."/>
            <person name="McLean J."/>
            <person name="Moule S."/>
            <person name="Murphy L.D."/>
            <person name="Oliver S."/>
            <person name="Osborne J."/>
            <person name="Quail M.A."/>
            <person name="Rajandream M.A."/>
            <person name="Rogers J."/>
            <person name="Rutter S."/>
            <person name="Seeger K."/>
            <person name="Skelton S."/>
            <person name="Squares S."/>
            <person name="Squares R."/>
            <person name="Sulston J.E."/>
            <person name="Taylor K."/>
            <person name="Whitehead S."/>
            <person name="Barrell B.G."/>
        </authorList>
    </citation>
    <scope>NUCLEOTIDE SEQUENCE [LARGE SCALE GENOMIC DNA]</scope>
    <source>
        <strain>ATCC 25618 / H37Rv</strain>
    </source>
</reference>
<reference key="2">
    <citation type="journal article" date="2006" name="J. Biol. Chem.">
        <title>Characterization of mRNA interferases from Mycobacterium tuberculosis.</title>
        <authorList>
            <person name="Zhu L."/>
            <person name="Zhang Y."/>
            <person name="Teh J.S."/>
            <person name="Zhang J."/>
            <person name="Connell N."/>
            <person name="Rubin H."/>
            <person name="Inouye M."/>
        </authorList>
    </citation>
    <scope>EXPRESSION IN E.COLI</scope>
    <source>
        <strain>ATCC 25618 / H37Rv</strain>
    </source>
</reference>
<reference key="3">
    <citation type="journal article" date="2007" name="FEMS Microbiol. Lett.">
        <title>Expression of Mycobacterium tuberculosis Rv1991c using an arabinose-inducible promoter demonstrates its role as a toxin.</title>
        <authorList>
            <person name="Carroll P."/>
            <person name="Brown A.C."/>
            <person name="Hartridge A.R."/>
            <person name="Parish T."/>
        </authorList>
    </citation>
    <scope>FUNCTION AS A TOXIN</scope>
</reference>
<reference key="4">
    <citation type="journal article" date="2008" name="FEBS Lett.">
        <title>Biochemical characterization of a chromosomal toxin-antitoxin system in Mycobacterium tuberculosis.</title>
        <authorList>
            <person name="Zhao L."/>
            <person name="Zhang J."/>
        </authorList>
    </citation>
    <scope>EXPRESSION IN E.COLI</scope>
    <scope>EXPRESSION IN M.SMEGMATIS</scope>
    <scope>SUBUNIT</scope>
    <scope>FUNCTION AS AN RNASE</scope>
    <source>
        <strain>ATCC 25618 / H37Rv</strain>
    </source>
</reference>
<reference key="5">
    <citation type="journal article" date="2008" name="Mol. Microbiol.">
        <title>The mRNA interferases, MazF-mt3 and MazF-mt7 from Mycobacterium tuberculosis target unique pentad sequences in single-stranded RNA.</title>
        <authorList>
            <person name="Zhu L."/>
            <person name="Phadtare S."/>
            <person name="Nariya H."/>
            <person name="Ouyang M."/>
            <person name="Husson R.N."/>
            <person name="Inouye M."/>
        </authorList>
    </citation>
    <scope>FUNCTION AS AN MRNA INTERFERASE</scope>
    <scope>SUBSTRATE SPECIFICITY</scope>
</reference>
<reference key="6">
    <citation type="journal article" date="2009" name="FEMS Microbiol. Lett.">
        <title>Killing activity and rescue function of genome-wide toxin-antitoxin loci of Mycobacterium tuberculosis.</title>
        <authorList>
            <person name="Gupta A."/>
        </authorList>
    </citation>
    <scope>EXPRESSION IN E.COLI</scope>
    <scope>FUNCTION AS A TOXIN</scope>
    <source>
        <strain>ATCC 25618 / H37Rv</strain>
    </source>
</reference>
<reference key="7">
    <citation type="journal article" date="2009" name="PLoS Genet.">
        <title>Comprehensive functional analysis of Mycobacterium tuberculosis toxin-antitoxin systems: implications for pathogenesis, stress responses, and evolution.</title>
        <authorList>
            <person name="Ramage H.R."/>
            <person name="Connolly L.E."/>
            <person name="Cox J.S."/>
        </authorList>
    </citation>
    <scope>EXPRESSION IN M.SMEGMATIS</scope>
    <scope>FUNCTION AS A TOXIN</scope>
    <source>
        <strain>ATCC 35801 / TMC 107 / Erdman</strain>
    </source>
</reference>
<reference key="8">
    <citation type="journal article" date="2010" name="J. Biol. Chem.">
        <title>Noncognate Mycobacterium tuberculosis toxin-antitoxins can physically and functionally interact.</title>
        <authorList>
            <person name="Zhu L."/>
            <person name="Sharp J.D."/>
            <person name="Kobayashi H."/>
            <person name="Woychik N.A."/>
            <person name="Inouye M."/>
        </authorList>
    </citation>
    <scope>FUNCTION AS A TOXIN</scope>
    <scope>INTERACTION WITH ANTITOXINS MAZE6; VAPB27 AND VAPB40</scope>
    <source>
        <strain>ATCC 25618 / H37Rv</strain>
    </source>
</reference>
<reference key="9">
    <citation type="journal article" date="2011" name="Mol. Cell. Proteomics">
        <title>Proteogenomic analysis of Mycobacterium tuberculosis by high resolution mass spectrometry.</title>
        <authorList>
            <person name="Kelkar D.S."/>
            <person name="Kumar D."/>
            <person name="Kumar P."/>
            <person name="Balakrishnan L."/>
            <person name="Muthusamy B."/>
            <person name="Yadav A.K."/>
            <person name="Shrivastava P."/>
            <person name="Marimuthu A."/>
            <person name="Anand S."/>
            <person name="Sundaram H."/>
            <person name="Kingsbury R."/>
            <person name="Harsha H.C."/>
            <person name="Nair B."/>
            <person name="Prasad T.S."/>
            <person name="Chauhan D.S."/>
            <person name="Katoch K."/>
            <person name="Katoch V.M."/>
            <person name="Kumar P."/>
            <person name="Chaerkady R."/>
            <person name="Ramachandran S."/>
            <person name="Dash D."/>
            <person name="Pandey A."/>
        </authorList>
    </citation>
    <scope>IDENTIFICATION BY MASS SPECTROMETRY [LARGE SCALE ANALYSIS]</scope>
    <source>
        <strain>ATCC 25618 / H37Rv</strain>
    </source>
</reference>
<reference key="10">
    <citation type="journal article" date="2013" name="Mol. Cell. Proteomics">
        <title>Proteomic profiling of Mycobacterium tuberculosis identifies nutrient-starvation-responsive toxin-antitoxin systems.</title>
        <authorList>
            <person name="Albrethsen J."/>
            <person name="Agner J."/>
            <person name="Piersma S.R."/>
            <person name="Hoejrup P."/>
            <person name="Pham T.V."/>
            <person name="Weldingh K."/>
            <person name="Jimenez C.R."/>
            <person name="Andersen P."/>
            <person name="Rosenkrands I."/>
        </authorList>
    </citation>
    <scope>IDENTIFICATION BY MASS SPECTROMETRY</scope>
    <scope>SUBCELLULAR LOCATION</scope>
    <source>
        <strain>ATCC 27294 / TMC 102 / H37Rv</strain>
    </source>
</reference>
<reference key="11">
    <citation type="journal article" date="2014" name="Nat. Commun.">
        <title>An RNA-seq method for defining endoribonuclease cleavage specificity identifies dual rRNA substrates for toxin MazF-mt3.</title>
        <authorList>
            <person name="Schifano J.M."/>
            <person name="Vvedenskaya I.O."/>
            <person name="Knoblauch J.G."/>
            <person name="Ouyang M."/>
            <person name="Nickels B.E."/>
            <person name="Woychik N.A."/>
        </authorList>
    </citation>
    <scope>FUNCTION</scope>
    <scope>SUBSTRATE SPECIFICITY</scope>
    <scope>EXPRESSION IN E.COLI</scope>
    <source>
        <strain>H37Rv</strain>
    </source>
</reference>
<reference key="12">
    <citation type="journal article" date="2015" name="Nat. Commun.">
        <title>MazF ribonucleases promote Mycobacterium tuberculosis drug tolerance and virulence in guinea pigs.</title>
        <authorList>
            <person name="Tiwari P."/>
            <person name="Arora G."/>
            <person name="Singh M."/>
            <person name="Kidwai S."/>
            <person name="Narayan O.P."/>
            <person name="Singh R."/>
        </authorList>
    </citation>
    <scope>FUNCTION</scope>
    <scope>INTERACTION WITH MAZE6</scope>
    <scope>INDUCTION</scope>
    <scope>DISRUPTION PHENOTYPE</scope>
    <source>
        <strain>H37Rv</strain>
    </source>
</reference>
<comment type="function">
    <text evidence="1 2 3 4 5 6 8 9">Toxic component of a type II toxin-antitoxin (TA) system. Upon expression in E.coli and in M.smegmatis partially inhibits cell growth and colony formation; its toxic effect is neutralized by coexpression with cognate antitoxin MazE6. Acts as an mRNA interferase on ssRNA, cleaving between the second and third bases in the sequences CUCCU and UUCCU (PubMed:18485066). Further experiments demonstrate that it digests between the first and second bases of UCCUU, yielding a 5'-hydroxyl end; digests M.tuberculosis mRNA (in coding as well as the 5'- and 3'-UTR regions) and 23S rRNA, digests E.coli 16S rRNA both alone and in the 70S ribosome but no data for M.tuberculosis 16S rRNA cleavage was presented. 23S and 16S rRNA digestion occurs in predicted single-stranded regions, the 16S rRNA UCCUU site is in the anti-Shine-Dalgarno site and would cleave off the last 7 nucleotides (PubMed:24709835). Non-cognate antitoxins VapB27 and VapB40 partially neutralize toxicity in vivo (PubMed:20876537).</text>
</comment>
<comment type="subunit">
    <text evidence="2 6 9">Forms a complex with cognate toxin MazE6, which neutralizes the toxin. Interacts physically with non-cognate antitoxins VapB27 and VapB40 which neutralize the toxin.</text>
</comment>
<comment type="subcellular location">
    <subcellularLocation>
        <location>Secreted</location>
    </subcellularLocation>
    <text evidence="7">Following 6 weeks of nutrient starvation.</text>
</comment>
<comment type="induction">
    <text evidence="9">Strongly induced (17 to 25-fold) by nitrosative stress, starvation, when grown in a non-replicating state, in the presence of gentamycin or rifampicin.</text>
</comment>
<comment type="disruption phenotype">
    <text evidence="9">Individual deletion of mazF3, mazF6 and mazF9 have little to no phenotype, but a triple mutant shows increased sensitivity to oxidative and antibiotic stress and starvation, decreased formation of persisters cells, and a decreased bacterial load and pathogenic damage in infected guinea pigs.</text>
</comment>
<comment type="similarity">
    <text evidence="12">Belongs to the PemK/MazF family.</text>
</comment>
<accession>P9WII3</accession>
<accession>L0T8B0</accession>
<accession>P64911</accession>
<accession>Q10867</accession>
<gene>
    <name type="primary">mazF6</name>
    <name evidence="10" type="synonym">mazF-mt3</name>
    <name type="ordered locus">Rv1991c</name>
    <name type="ORF">MTCY39.28</name>
</gene>
<feature type="chain" id="PRO_0000201904" description="Endoribonuclease MazF6">
    <location>
        <begin position="1"/>
        <end position="114"/>
    </location>
</feature>
<feature type="strand" evidence="13">
    <location>
        <begin position="7"/>
        <end position="12"/>
    </location>
</feature>
<feature type="strand" evidence="13">
    <location>
        <begin position="23"/>
        <end position="29"/>
    </location>
</feature>
<feature type="helix" evidence="13">
    <location>
        <begin position="33"/>
        <end position="36"/>
    </location>
</feature>
<feature type="strand" evidence="13">
    <location>
        <begin position="42"/>
        <end position="50"/>
    </location>
</feature>
<feature type="helix" evidence="14">
    <location>
        <begin position="52"/>
        <end position="56"/>
    </location>
</feature>
<feature type="strand" evidence="13">
    <location>
        <begin position="61"/>
        <end position="63"/>
    </location>
</feature>
<feature type="helix" evidence="13">
    <location>
        <begin position="65"/>
        <end position="68"/>
    </location>
</feature>
<feature type="strand" evidence="13">
    <location>
        <begin position="74"/>
        <end position="85"/>
    </location>
</feature>
<feature type="helix" evidence="13">
    <location>
        <begin position="86"/>
        <end position="88"/>
    </location>
</feature>
<feature type="strand" evidence="13">
    <location>
        <begin position="91"/>
        <end position="95"/>
    </location>
</feature>
<feature type="helix" evidence="13">
    <location>
        <begin position="98"/>
        <end position="112"/>
    </location>
</feature>
<protein>
    <recommendedName>
        <fullName evidence="12">Endoribonuclease MazF6</fullName>
        <ecNumber evidence="12">3.1.27.-</ecNumber>
    </recommendedName>
    <alternativeName>
        <fullName evidence="10">Toxin MazF6</fullName>
    </alternativeName>
    <alternativeName>
        <fullName evidence="11">mRNA interferase MazF-mt3</fullName>
    </alternativeName>
</protein>
<proteinExistence type="evidence at protein level"/>
<name>MAZF6_MYCTU</name>
<dbReference type="EC" id="3.1.27.-" evidence="12"/>
<dbReference type="EMBL" id="AL123456">
    <property type="protein sequence ID" value="CCP44762.1"/>
    <property type="molecule type" value="Genomic_DNA"/>
</dbReference>
<dbReference type="PIR" id="E70757">
    <property type="entry name" value="E70757"/>
</dbReference>
<dbReference type="RefSeq" id="NP_216507.1">
    <property type="nucleotide sequence ID" value="NC_000962.3"/>
</dbReference>
<dbReference type="RefSeq" id="WP_003410010.1">
    <property type="nucleotide sequence ID" value="NZ_NVQJ01000043.1"/>
</dbReference>
<dbReference type="PDB" id="5HK0">
    <property type="method" value="X-ray"/>
    <property type="resolution" value="2.25 A"/>
    <property type="chains" value="A/B/C/D=1-114"/>
</dbReference>
<dbReference type="PDB" id="5HK3">
    <property type="method" value="X-ray"/>
    <property type="resolution" value="1.56 A"/>
    <property type="chains" value="A/B=1-114"/>
</dbReference>
<dbReference type="PDB" id="5HKC">
    <property type="method" value="X-ray"/>
    <property type="resolution" value="1.68 A"/>
    <property type="chains" value="A/B=1-114"/>
</dbReference>
<dbReference type="PDBsum" id="5HK0"/>
<dbReference type="PDBsum" id="5HK3"/>
<dbReference type="PDBsum" id="5HKC"/>
<dbReference type="SMR" id="P9WII3"/>
<dbReference type="FunCoup" id="P9WII3">
    <property type="interactions" value="1"/>
</dbReference>
<dbReference type="STRING" id="83332.Rv1991c"/>
<dbReference type="PaxDb" id="83332-Rv1991c"/>
<dbReference type="DNASU" id="885634"/>
<dbReference type="GeneID" id="45425969"/>
<dbReference type="GeneID" id="885634"/>
<dbReference type="KEGG" id="mtu:Rv1991c"/>
<dbReference type="KEGG" id="mtv:RVBD_1991c"/>
<dbReference type="TubercuList" id="Rv1991c"/>
<dbReference type="eggNOG" id="COG2337">
    <property type="taxonomic scope" value="Bacteria"/>
</dbReference>
<dbReference type="InParanoid" id="P9WII3"/>
<dbReference type="OrthoDB" id="9808744at2"/>
<dbReference type="PhylomeDB" id="P9WII3"/>
<dbReference type="Proteomes" id="UP000001584">
    <property type="component" value="Chromosome"/>
</dbReference>
<dbReference type="GO" id="GO:0005576">
    <property type="term" value="C:extracellular region"/>
    <property type="evidence" value="ECO:0007669"/>
    <property type="project" value="UniProtKB-SubCell"/>
</dbReference>
<dbReference type="GO" id="GO:0003677">
    <property type="term" value="F:DNA binding"/>
    <property type="evidence" value="ECO:0007669"/>
    <property type="project" value="InterPro"/>
</dbReference>
<dbReference type="GO" id="GO:0004521">
    <property type="term" value="F:RNA endonuclease activity"/>
    <property type="evidence" value="ECO:0000318"/>
    <property type="project" value="GO_Central"/>
</dbReference>
<dbReference type="GO" id="GO:0004540">
    <property type="term" value="F:RNA nuclease activity"/>
    <property type="evidence" value="ECO:0000314"/>
    <property type="project" value="MTBBASE"/>
</dbReference>
<dbReference type="GO" id="GO:0006402">
    <property type="term" value="P:mRNA catabolic process"/>
    <property type="evidence" value="ECO:0000315"/>
    <property type="project" value="MTBBASE"/>
</dbReference>
<dbReference type="GO" id="GO:0045926">
    <property type="term" value="P:negative regulation of growth"/>
    <property type="evidence" value="ECO:0000315"/>
    <property type="project" value="MTBBASE"/>
</dbReference>
<dbReference type="GO" id="GO:0045927">
    <property type="term" value="P:positive regulation of growth"/>
    <property type="evidence" value="ECO:0000315"/>
    <property type="project" value="MTBBASE"/>
</dbReference>
<dbReference type="GO" id="GO:0016075">
    <property type="term" value="P:rRNA catabolic process"/>
    <property type="evidence" value="ECO:0000315"/>
    <property type="project" value="UniProtKB"/>
</dbReference>
<dbReference type="GO" id="GO:0044003">
    <property type="term" value="P:symbiont-mediated perturbation of host process"/>
    <property type="evidence" value="ECO:0000315"/>
    <property type="project" value="MTBBASE"/>
</dbReference>
<dbReference type="FunFam" id="2.30.30.110:FF:000003">
    <property type="entry name" value="mRNA interferase"/>
    <property type="match status" value="1"/>
</dbReference>
<dbReference type="Gene3D" id="2.30.30.110">
    <property type="match status" value="1"/>
</dbReference>
<dbReference type="InterPro" id="IPR003477">
    <property type="entry name" value="PemK-like"/>
</dbReference>
<dbReference type="InterPro" id="IPR011067">
    <property type="entry name" value="Plasmid_toxin/cell-grow_inhib"/>
</dbReference>
<dbReference type="PANTHER" id="PTHR33988:SF2">
    <property type="entry name" value="ENDORIBONUCLEASE MAZF"/>
    <property type="match status" value="1"/>
</dbReference>
<dbReference type="PANTHER" id="PTHR33988">
    <property type="entry name" value="ENDORIBONUCLEASE MAZF-RELATED"/>
    <property type="match status" value="1"/>
</dbReference>
<dbReference type="Pfam" id="PF02452">
    <property type="entry name" value="PemK_toxin"/>
    <property type="match status" value="1"/>
</dbReference>
<dbReference type="PIRSF" id="PIRSF033490">
    <property type="entry name" value="MazF"/>
    <property type="match status" value="1"/>
</dbReference>
<dbReference type="SUPFAM" id="SSF50118">
    <property type="entry name" value="Cell growth inhibitor/plasmid maintenance toxic component"/>
    <property type="match status" value="1"/>
</dbReference>
<sequence>MVISRAEIYWADLGPPSGSQPAKRRPVLVIQSDPYNASRLATVIAAVITSNTALAAMPGNVFLPATTTRLPRDSVVNVTAIVTLNKTDLTDRVGEVPASLMHEVDRGLRRVLDL</sequence>
<evidence type="ECO:0000269" key="1">
    <source>
    </source>
</evidence>
<evidence type="ECO:0000269" key="2">
    <source>
    </source>
</evidence>
<evidence type="ECO:0000269" key="3">
    <source>
    </source>
</evidence>
<evidence type="ECO:0000269" key="4">
    <source>
    </source>
</evidence>
<evidence type="ECO:0000269" key="5">
    <source>
    </source>
</evidence>
<evidence type="ECO:0000269" key="6">
    <source>
    </source>
</evidence>
<evidence type="ECO:0000269" key="7">
    <source>
    </source>
</evidence>
<evidence type="ECO:0000269" key="8">
    <source>
    </source>
</evidence>
<evidence type="ECO:0000269" key="9">
    <source>
    </source>
</evidence>
<evidence type="ECO:0000303" key="10">
    <source>
    </source>
</evidence>
<evidence type="ECO:0000303" key="11">
    <source>
    </source>
</evidence>
<evidence type="ECO:0000305" key="12"/>
<evidence type="ECO:0007829" key="13">
    <source>
        <dbReference type="PDB" id="5HK3"/>
    </source>
</evidence>
<evidence type="ECO:0007829" key="14">
    <source>
        <dbReference type="PDB" id="5HKC"/>
    </source>
</evidence>
<keyword id="KW-0002">3D-structure</keyword>
<keyword id="KW-0255">Endonuclease</keyword>
<keyword id="KW-0378">Hydrolase</keyword>
<keyword id="KW-0540">Nuclease</keyword>
<keyword id="KW-1185">Reference proteome</keyword>
<keyword id="KW-0964">Secreted</keyword>
<keyword id="KW-1277">Toxin-antitoxin system</keyword>
<organism>
    <name type="scientific">Mycobacterium tuberculosis (strain ATCC 25618 / H37Rv)</name>
    <dbReference type="NCBI Taxonomy" id="83332"/>
    <lineage>
        <taxon>Bacteria</taxon>
        <taxon>Bacillati</taxon>
        <taxon>Actinomycetota</taxon>
        <taxon>Actinomycetes</taxon>
        <taxon>Mycobacteriales</taxon>
        <taxon>Mycobacteriaceae</taxon>
        <taxon>Mycobacterium</taxon>
        <taxon>Mycobacterium tuberculosis complex</taxon>
    </lineage>
</organism>